<evidence type="ECO:0000250" key="1"/>
<evidence type="ECO:0000255" key="2"/>
<evidence type="ECO:0000256" key="3">
    <source>
        <dbReference type="SAM" id="MobiDB-lite"/>
    </source>
</evidence>
<evidence type="ECO:0000305" key="4"/>
<keyword id="KW-0325">Glycoprotein</keyword>
<keyword id="KW-0326">Glycosidase</keyword>
<keyword id="KW-0378">Hydrolase</keyword>
<keyword id="KW-0472">Membrane</keyword>
<keyword id="KW-0479">Metal-binding</keyword>
<keyword id="KW-1185">Reference proteome</keyword>
<keyword id="KW-0732">Signal</keyword>
<keyword id="KW-0812">Transmembrane</keyword>
<keyword id="KW-1133">Transmembrane helix</keyword>
<keyword id="KW-0862">Zinc</keyword>
<feature type="signal peptide" evidence="2">
    <location>
        <begin position="1"/>
        <end position="21"/>
    </location>
</feature>
<feature type="chain" id="PRO_0000327843" description="Alpha-mannosidase D">
    <location>
        <begin position="22"/>
        <end position="1222"/>
    </location>
</feature>
<feature type="topological domain" description="Extracellular" evidence="2">
    <location>
        <begin position="22"/>
        <end position="1170"/>
    </location>
</feature>
<feature type="transmembrane region" description="Helical" evidence="2">
    <location>
        <begin position="1171"/>
        <end position="1191"/>
    </location>
</feature>
<feature type="topological domain" description="Cytoplasmic" evidence="2">
    <location>
        <begin position="1192"/>
        <end position="1222"/>
    </location>
</feature>
<feature type="region of interest" description="Disordered" evidence="3">
    <location>
        <begin position="493"/>
        <end position="554"/>
    </location>
</feature>
<feature type="region of interest" description="Disordered" evidence="3">
    <location>
        <begin position="1202"/>
        <end position="1222"/>
    </location>
</feature>
<feature type="compositionally biased region" description="Low complexity" evidence="3">
    <location>
        <begin position="493"/>
        <end position="549"/>
    </location>
</feature>
<feature type="compositionally biased region" description="Low complexity" evidence="3">
    <location>
        <begin position="1202"/>
        <end position="1211"/>
    </location>
</feature>
<feature type="compositionally biased region" description="Polar residues" evidence="3">
    <location>
        <begin position="1212"/>
        <end position="1222"/>
    </location>
</feature>
<feature type="active site" description="Nucleophile" evidence="1">
    <location>
        <position position="185"/>
    </location>
</feature>
<feature type="binding site" evidence="1">
    <location>
        <position position="71"/>
    </location>
    <ligand>
        <name>Zn(2+)</name>
        <dbReference type="ChEBI" id="CHEBI:29105"/>
    </ligand>
</feature>
<feature type="binding site" evidence="1">
    <location>
        <position position="73"/>
    </location>
    <ligand>
        <name>Zn(2+)</name>
        <dbReference type="ChEBI" id="CHEBI:29105"/>
    </ligand>
</feature>
<feature type="binding site" evidence="1">
    <location>
        <position position="185"/>
    </location>
    <ligand>
        <name>Zn(2+)</name>
        <dbReference type="ChEBI" id="CHEBI:29105"/>
    </ligand>
</feature>
<feature type="binding site" evidence="1">
    <location>
        <position position="453"/>
    </location>
    <ligand>
        <name>Zn(2+)</name>
        <dbReference type="ChEBI" id="CHEBI:29105"/>
    </ligand>
</feature>
<feature type="glycosylation site" description="N-linked (GlcNAc...) asparagine" evidence="2">
    <location>
        <position position="175"/>
    </location>
</feature>
<feature type="glycosylation site" description="N-linked (GlcNAc...) asparagine" evidence="2">
    <location>
        <position position="492"/>
    </location>
</feature>
<feature type="glycosylation site" description="N-linked (GlcNAc...) asparagine" evidence="2">
    <location>
        <position position="496"/>
    </location>
</feature>
<feature type="glycosylation site" description="N-linked (GlcNAc...) asparagine" evidence="2">
    <location>
        <position position="547"/>
    </location>
</feature>
<feature type="glycosylation site" description="N-linked (GlcNAc...) asparagine" evidence="2">
    <location>
        <position position="551"/>
    </location>
</feature>
<feature type="glycosylation site" description="N-linked (GlcNAc...) asparagine" evidence="2">
    <location>
        <position position="566"/>
    </location>
</feature>
<feature type="glycosylation site" description="N-linked (GlcNAc...) asparagine" evidence="2">
    <location>
        <position position="613"/>
    </location>
</feature>
<feature type="glycosylation site" description="N-linked (GlcNAc...) asparagine" evidence="2">
    <location>
        <position position="665"/>
    </location>
</feature>
<feature type="glycosylation site" description="N-linked (GlcNAc...) asparagine" evidence="2">
    <location>
        <position position="768"/>
    </location>
</feature>
<feature type="glycosylation site" description="N-linked (GlcNAc...) asparagine" evidence="2">
    <location>
        <position position="785"/>
    </location>
</feature>
<feature type="glycosylation site" description="N-linked (GlcNAc...) asparagine" evidence="2">
    <location>
        <position position="952"/>
    </location>
</feature>
<feature type="glycosylation site" description="N-linked (GlcNAc...) asparagine" evidence="2">
    <location>
        <position position="981"/>
    </location>
</feature>
<feature type="glycosylation site" description="N-linked (GlcNAc...) asparagine" evidence="2">
    <location>
        <position position="1069"/>
    </location>
</feature>
<feature type="glycosylation site" description="N-linked (GlcNAc...) asparagine" evidence="2">
    <location>
        <position position="1084"/>
    </location>
</feature>
<sequence length="1222" mass="141190">MESSKFVKIIWVFGIWILVFTFLIIYNNYDYKSTFGINKFEKRSLKTINQINNKENGDDKKLSVFLIPHSHCDGGWLQDYDGYYYNIVQYILSGVVNELNLDKEKKFNWVEIGFFSRWWNDQNEIQKEIVRNLINNKQLSFISGGWVQNDEATATIDDVITQMTQGHQWLKDTLNYTVEYAWQIDPFGYSSSTPTIFSSMGIKGLVINRVSNDVKSYMKSVKEMEFIWKGSESLGEQSQMLVSTLNIHYDYPKHIDPKKDFSLNDRIKGFTKYLNDLSKTRESNILMIPLGDDFRYSNAKTEFSVSKEWVKALQDNKEYYNIKEIKYATLDEYFIALEDSFLRNNKFGKSRKQNVYTETFSDGDDEVSALSLYNKDFFPYSTGNLEYWTGYYTTRPLLKRLIRESSLLQKSSDILYTLAIGENSNNQIDINNLQTLSNQLNENRNTIALVQHHDIVTGTSRSFVLNDNFQRLQKSRISNYNIISNSLEYLLNKSNNKTNNNNNNNNKNNNNNNNNNNNNNNNLKNTNSISTTGSSSSSGSGSSNNNNNTVNKSEPFNFENAIDLSNESNNQYSLVFHNTLGWEVNQHVSFRIKVNKNDNQLLESIQLVEAISNKTIQIQIIPIQDDSNCQSIENNYIVFAIINLPPLGLNTYYLSIANSEDSKSNFTYLSKPKLLKKGNEINFNNNRFKVEFESNGLISKITDKNSNEIKTIEQTFHQYSTKKSGPYIFNVKGGKKHGFLENPDKFIYHDGPLVSQLTMLYGVDDYCNVTSIVVQRIYKNNNEINNSNSKSLITENYIETGYSINGDMNRETTINYKVKDLENDDIFYTDNGLESRKRIYNHDRSVNQNYYPVLGYIKLKETSENNNHQYTVYVDRSVGATSPSDGEMEIMIHRTMDTDDWKGVNWPSKDIGRSDAKLYFNMDLVNNQLQNEKRISLHITNQPIMFVKKHNNQTGYLLKYSPLSNQLPSNIHLQSLLTLKNNTVGLRLFNIHEVDSNTQSTTDTDKSTLFNELEISNFIETGLSFLKLTKNNLIDKFSTRINKKFPIKCGESEYSFINEKPSSIIFSNNGTNNIIDGENKGENNKTIETIQIKPHEIKSFTFNFNFQLDQIIPNNNNNNNKYAINKELNNEYIEQSIENQRYEYDFSFFPIKPTFYDDRGKYNRPNHLALILSLSIGIPAGILIIVIALVVTYKKRKNRKTLTSSNSSSNLIQQEDQTDYSP</sequence>
<name>MAND_DICDI</name>
<accession>Q54YC4</accession>
<protein>
    <recommendedName>
        <fullName>Alpha-mannosidase D</fullName>
        <ecNumber>3.2.1.24</ecNumber>
    </recommendedName>
</protein>
<comment type="catalytic activity">
    <reaction>
        <text>Hydrolysis of terminal, non-reducing alpha-D-mannose residues in alpha-D-mannosides.</text>
        <dbReference type="EC" id="3.2.1.24"/>
    </reaction>
</comment>
<comment type="cofactor">
    <cofactor evidence="1">
        <name>Zn(2+)</name>
        <dbReference type="ChEBI" id="CHEBI:29105"/>
    </cofactor>
    <text evidence="1">Binds 1 zinc ion per subunit.</text>
</comment>
<comment type="subcellular location">
    <subcellularLocation>
        <location evidence="4">Membrane</location>
        <topology evidence="4">Single-pass type I membrane protein</topology>
    </subcellularLocation>
</comment>
<comment type="similarity">
    <text evidence="4">Belongs to the glycosyl hydrolase 38 family.</text>
</comment>
<organism>
    <name type="scientific">Dictyostelium discoideum</name>
    <name type="common">Social amoeba</name>
    <dbReference type="NCBI Taxonomy" id="44689"/>
    <lineage>
        <taxon>Eukaryota</taxon>
        <taxon>Amoebozoa</taxon>
        <taxon>Evosea</taxon>
        <taxon>Eumycetozoa</taxon>
        <taxon>Dictyostelia</taxon>
        <taxon>Dictyosteliales</taxon>
        <taxon>Dictyosteliaceae</taxon>
        <taxon>Dictyostelium</taxon>
    </lineage>
</organism>
<gene>
    <name type="primary">manD</name>
    <name type="ORF">DDB_G0278653</name>
</gene>
<proteinExistence type="inferred from homology"/>
<dbReference type="EC" id="3.2.1.24"/>
<dbReference type="EMBL" id="AAFI02000023">
    <property type="protein sequence ID" value="EAL68499.1"/>
    <property type="molecule type" value="Genomic_DNA"/>
</dbReference>
<dbReference type="RefSeq" id="XP_642278.1">
    <property type="nucleotide sequence ID" value="XM_637186.1"/>
</dbReference>
<dbReference type="SMR" id="Q54YC4"/>
<dbReference type="FunCoup" id="Q54YC4">
    <property type="interactions" value="1"/>
</dbReference>
<dbReference type="STRING" id="44689.Q54YC4"/>
<dbReference type="GlyCosmos" id="Q54YC4">
    <property type="glycosylation" value="14 sites, No reported glycans"/>
</dbReference>
<dbReference type="GlyGen" id="Q54YC4">
    <property type="glycosylation" value="14 sites"/>
</dbReference>
<dbReference type="PaxDb" id="44689-DDB0231614"/>
<dbReference type="EnsemblProtists" id="EAL68499">
    <property type="protein sequence ID" value="EAL68499"/>
    <property type="gene ID" value="DDB_G0278653"/>
</dbReference>
<dbReference type="GeneID" id="8621485"/>
<dbReference type="KEGG" id="ddi:DDB_G0278653"/>
<dbReference type="dictyBase" id="DDB_G0278653">
    <property type="gene designation" value="manD"/>
</dbReference>
<dbReference type="VEuPathDB" id="AmoebaDB:DDB_G0278653"/>
<dbReference type="eggNOG" id="KOG1958">
    <property type="taxonomic scope" value="Eukaryota"/>
</dbReference>
<dbReference type="HOGENOM" id="CLU_268576_0_0_1"/>
<dbReference type="InParanoid" id="Q54YC4"/>
<dbReference type="OMA" id="GDPPEFY"/>
<dbReference type="PhylomeDB" id="Q54YC4"/>
<dbReference type="Reactome" id="R-DDI-8853383">
    <property type="pathway name" value="Lysosomal oligosaccharide catabolism"/>
</dbReference>
<dbReference type="PRO" id="PR:Q54YC4"/>
<dbReference type="Proteomes" id="UP000002195">
    <property type="component" value="Chromosome 3"/>
</dbReference>
<dbReference type="GO" id="GO:0031012">
    <property type="term" value="C:extracellular matrix"/>
    <property type="evidence" value="ECO:0007005"/>
    <property type="project" value="dictyBase"/>
</dbReference>
<dbReference type="GO" id="GO:0005764">
    <property type="term" value="C:lysosome"/>
    <property type="evidence" value="ECO:0000318"/>
    <property type="project" value="GO_Central"/>
</dbReference>
<dbReference type="GO" id="GO:0016020">
    <property type="term" value="C:membrane"/>
    <property type="evidence" value="ECO:0007669"/>
    <property type="project" value="UniProtKB-SubCell"/>
</dbReference>
<dbReference type="GO" id="GO:0004559">
    <property type="term" value="F:alpha-mannosidase activity"/>
    <property type="evidence" value="ECO:0000318"/>
    <property type="project" value="GO_Central"/>
</dbReference>
<dbReference type="GO" id="GO:0030246">
    <property type="term" value="F:carbohydrate binding"/>
    <property type="evidence" value="ECO:0007669"/>
    <property type="project" value="InterPro"/>
</dbReference>
<dbReference type="GO" id="GO:0046872">
    <property type="term" value="F:metal ion binding"/>
    <property type="evidence" value="ECO:0007669"/>
    <property type="project" value="UniProtKB-KW"/>
</dbReference>
<dbReference type="GO" id="GO:0006013">
    <property type="term" value="P:mannose metabolic process"/>
    <property type="evidence" value="ECO:0007669"/>
    <property type="project" value="InterPro"/>
</dbReference>
<dbReference type="CDD" id="cd00451">
    <property type="entry name" value="GH38N_AMII_euk"/>
    <property type="match status" value="1"/>
</dbReference>
<dbReference type="FunFam" id="1.20.1270.50:FF:000001">
    <property type="entry name" value="Alpha-mannosidase"/>
    <property type="match status" value="1"/>
</dbReference>
<dbReference type="FunFam" id="2.70.98.30:FF:000012">
    <property type="entry name" value="Alpha-mannosidase"/>
    <property type="match status" value="1"/>
</dbReference>
<dbReference type="FunFam" id="2.60.40.1180:FF:000094">
    <property type="entry name" value="Alpha-mannosidase D"/>
    <property type="match status" value="1"/>
</dbReference>
<dbReference type="FunFam" id="3.20.110.10:FF:000017">
    <property type="entry name" value="Alpha-mannosidase D"/>
    <property type="match status" value="1"/>
</dbReference>
<dbReference type="Gene3D" id="2.60.40.1360">
    <property type="match status" value="1"/>
</dbReference>
<dbReference type="Gene3D" id="3.20.110.10">
    <property type="entry name" value="Glycoside hydrolase 38, N terminal domain"/>
    <property type="match status" value="1"/>
</dbReference>
<dbReference type="Gene3D" id="1.20.1270.50">
    <property type="entry name" value="Glycoside hydrolase family 38, central domain"/>
    <property type="match status" value="1"/>
</dbReference>
<dbReference type="Gene3D" id="2.60.40.1180">
    <property type="entry name" value="Golgi alpha-mannosidase II"/>
    <property type="match status" value="1"/>
</dbReference>
<dbReference type="Gene3D" id="2.70.98.30">
    <property type="entry name" value="Golgi alpha-mannosidase II, domain 4"/>
    <property type="match status" value="1"/>
</dbReference>
<dbReference type="InterPro" id="IPR011013">
    <property type="entry name" value="Gal_mutarotase_sf_dom"/>
</dbReference>
<dbReference type="InterPro" id="IPR011330">
    <property type="entry name" value="Glyco_hydro/deAcase_b/a-brl"/>
</dbReference>
<dbReference type="InterPro" id="IPR011682">
    <property type="entry name" value="Glyco_hydro_38_C"/>
</dbReference>
<dbReference type="InterPro" id="IPR015341">
    <property type="entry name" value="Glyco_hydro_38_cen"/>
</dbReference>
<dbReference type="InterPro" id="IPR037094">
    <property type="entry name" value="Glyco_hydro_38_cen_sf"/>
</dbReference>
<dbReference type="InterPro" id="IPR000602">
    <property type="entry name" value="Glyco_hydro_38_N"/>
</dbReference>
<dbReference type="InterPro" id="IPR027291">
    <property type="entry name" value="Glyco_hydro_38_N_sf"/>
</dbReference>
<dbReference type="InterPro" id="IPR028995">
    <property type="entry name" value="Glyco_hydro_57/38_cen_sf"/>
</dbReference>
<dbReference type="InterPro" id="IPR013780">
    <property type="entry name" value="Glyco_hydro_b"/>
</dbReference>
<dbReference type="InterPro" id="IPR050843">
    <property type="entry name" value="Glycosyl_Hydrlase_38"/>
</dbReference>
<dbReference type="PANTHER" id="PTHR11607">
    <property type="entry name" value="ALPHA-MANNOSIDASE"/>
    <property type="match status" value="1"/>
</dbReference>
<dbReference type="PANTHER" id="PTHR11607:SF39">
    <property type="entry name" value="ALPHA-MANNOSIDASE D-RELATED"/>
    <property type="match status" value="1"/>
</dbReference>
<dbReference type="Pfam" id="PF09261">
    <property type="entry name" value="Alpha-mann_mid"/>
    <property type="match status" value="1"/>
</dbReference>
<dbReference type="Pfam" id="PF07748">
    <property type="entry name" value="Glyco_hydro_38C"/>
    <property type="match status" value="1"/>
</dbReference>
<dbReference type="Pfam" id="PF01074">
    <property type="entry name" value="Glyco_hydro_38N"/>
    <property type="match status" value="1"/>
</dbReference>
<dbReference type="SMART" id="SM00872">
    <property type="entry name" value="Alpha-mann_mid"/>
    <property type="match status" value="1"/>
</dbReference>
<dbReference type="SUPFAM" id="SSF88688">
    <property type="entry name" value="Families 57/38 glycoside transferase middle domain"/>
    <property type="match status" value="1"/>
</dbReference>
<dbReference type="SUPFAM" id="SSF74650">
    <property type="entry name" value="Galactose mutarotase-like"/>
    <property type="match status" value="1"/>
</dbReference>
<dbReference type="SUPFAM" id="SSF88713">
    <property type="entry name" value="Glycoside hydrolase/deacetylase"/>
    <property type="match status" value="1"/>
</dbReference>
<reference key="1">
    <citation type="journal article" date="2005" name="Nature">
        <title>The genome of the social amoeba Dictyostelium discoideum.</title>
        <authorList>
            <person name="Eichinger L."/>
            <person name="Pachebat J.A."/>
            <person name="Gloeckner G."/>
            <person name="Rajandream M.A."/>
            <person name="Sucgang R."/>
            <person name="Berriman M."/>
            <person name="Song J."/>
            <person name="Olsen R."/>
            <person name="Szafranski K."/>
            <person name="Xu Q."/>
            <person name="Tunggal B."/>
            <person name="Kummerfeld S."/>
            <person name="Madera M."/>
            <person name="Konfortov B.A."/>
            <person name="Rivero F."/>
            <person name="Bankier A.T."/>
            <person name="Lehmann R."/>
            <person name="Hamlin N."/>
            <person name="Davies R."/>
            <person name="Gaudet P."/>
            <person name="Fey P."/>
            <person name="Pilcher K."/>
            <person name="Chen G."/>
            <person name="Saunders D."/>
            <person name="Sodergren E.J."/>
            <person name="Davis P."/>
            <person name="Kerhornou A."/>
            <person name="Nie X."/>
            <person name="Hall N."/>
            <person name="Anjard C."/>
            <person name="Hemphill L."/>
            <person name="Bason N."/>
            <person name="Farbrother P."/>
            <person name="Desany B."/>
            <person name="Just E."/>
            <person name="Morio T."/>
            <person name="Rost R."/>
            <person name="Churcher C.M."/>
            <person name="Cooper J."/>
            <person name="Haydock S."/>
            <person name="van Driessche N."/>
            <person name="Cronin A."/>
            <person name="Goodhead I."/>
            <person name="Muzny D.M."/>
            <person name="Mourier T."/>
            <person name="Pain A."/>
            <person name="Lu M."/>
            <person name="Harper D."/>
            <person name="Lindsay R."/>
            <person name="Hauser H."/>
            <person name="James K.D."/>
            <person name="Quiles M."/>
            <person name="Madan Babu M."/>
            <person name="Saito T."/>
            <person name="Buchrieser C."/>
            <person name="Wardroper A."/>
            <person name="Felder M."/>
            <person name="Thangavelu M."/>
            <person name="Johnson D."/>
            <person name="Knights A."/>
            <person name="Loulseged H."/>
            <person name="Mungall K.L."/>
            <person name="Oliver K."/>
            <person name="Price C."/>
            <person name="Quail M.A."/>
            <person name="Urushihara H."/>
            <person name="Hernandez J."/>
            <person name="Rabbinowitsch E."/>
            <person name="Steffen D."/>
            <person name="Sanders M."/>
            <person name="Ma J."/>
            <person name="Kohara Y."/>
            <person name="Sharp S."/>
            <person name="Simmonds M.N."/>
            <person name="Spiegler S."/>
            <person name="Tivey A."/>
            <person name="Sugano S."/>
            <person name="White B."/>
            <person name="Walker D."/>
            <person name="Woodward J.R."/>
            <person name="Winckler T."/>
            <person name="Tanaka Y."/>
            <person name="Shaulsky G."/>
            <person name="Schleicher M."/>
            <person name="Weinstock G.M."/>
            <person name="Rosenthal A."/>
            <person name="Cox E.C."/>
            <person name="Chisholm R.L."/>
            <person name="Gibbs R.A."/>
            <person name="Loomis W.F."/>
            <person name="Platzer M."/>
            <person name="Kay R.R."/>
            <person name="Williams J.G."/>
            <person name="Dear P.H."/>
            <person name="Noegel A.A."/>
            <person name="Barrell B.G."/>
            <person name="Kuspa A."/>
        </authorList>
    </citation>
    <scope>NUCLEOTIDE SEQUENCE [LARGE SCALE GENOMIC DNA]</scope>
    <source>
        <strain>AX4</strain>
    </source>
</reference>